<proteinExistence type="evidence at protein level"/>
<organism>
    <name type="scientific">Pseudomonas aeruginosa (strain ATCC 15692 / DSM 22644 / CIP 104116 / JCM 14847 / LMG 12228 / 1C / PRS 101 / PAO1)</name>
    <dbReference type="NCBI Taxonomy" id="208964"/>
    <lineage>
        <taxon>Bacteria</taxon>
        <taxon>Pseudomonadati</taxon>
        <taxon>Pseudomonadota</taxon>
        <taxon>Gammaproteobacteria</taxon>
        <taxon>Pseudomonadales</taxon>
        <taxon>Pseudomonadaceae</taxon>
        <taxon>Pseudomonas</taxon>
    </lineage>
</organism>
<protein>
    <recommendedName>
        <fullName evidence="1">Adenosylhomocysteinase</fullName>
        <ecNumber evidence="1">3.13.2.1</ecNumber>
    </recommendedName>
    <alternativeName>
        <fullName evidence="1">S-adenosyl-L-homocysteine hydrolase</fullName>
        <shortName evidence="1">AdoHcyase</shortName>
    </alternativeName>
</protein>
<evidence type="ECO:0000255" key="1">
    <source>
        <dbReference type="HAMAP-Rule" id="MF_00563"/>
    </source>
</evidence>
<evidence type="ECO:0007829" key="2">
    <source>
        <dbReference type="PDB" id="6F3O"/>
    </source>
</evidence>
<evidence type="ECO:0007829" key="3">
    <source>
        <dbReference type="PDB" id="7ZD1"/>
    </source>
</evidence>
<evidence type="ECO:0007829" key="4">
    <source>
        <dbReference type="PDB" id="8CFN"/>
    </source>
</evidence>
<evidence type="ECO:0007829" key="5">
    <source>
        <dbReference type="PDB" id="8CFV"/>
    </source>
</evidence>
<sequence length="469" mass="51400">MSAVMTPAGFTDYKVADITLAAWGRRELIIAESEMPALMGLRRKYAGQQPLKGAKILGCIHMTIQTGVLIETLVALGAEVRWSSCNIFSTQDQAAAAIAAAGIPVFAWKGETEEEYEWCIEQTILKDGQPWDANMVLDDGGDLTEILHKKYPQMLERIHGITEETTTGVHRLLDMLKNGTLKVPAINVNDSVTKSKNDNKYGCRHSLNDAIKRGTDHLLSGKQALVIGYGDVGKGSSQSLRQEGMIVKVAEVDPICAMQACMDGFEVVSPYKNGINDGTEASIDAALLGKIDLIVTTTGNVNVCDANMLKALKKRAVVCNIGHFDNEIDTAFMRKNWAWEEVKPQVHKIHRTGKDGFDAHNDDYLILLAEGRLVNLGNATGHPSRIMDGSFANQVLAQIHLFEQKYADLPAAEKAKRLSVEVLPKKLDEEVALEMVKGFGGVVTQLTPKQAEYIGVSVEGPFKPDTYRY</sequence>
<keyword id="KW-0002">3D-structure</keyword>
<keyword id="KW-0963">Cytoplasm</keyword>
<keyword id="KW-0378">Hydrolase</keyword>
<keyword id="KW-0520">NAD</keyword>
<keyword id="KW-0554">One-carbon metabolism</keyword>
<keyword id="KW-1185">Reference proteome</keyword>
<dbReference type="EC" id="3.13.2.1" evidence="1"/>
<dbReference type="EMBL" id="AE004091">
    <property type="protein sequence ID" value="AAG03821.1"/>
    <property type="molecule type" value="Genomic_DNA"/>
</dbReference>
<dbReference type="PIR" id="H83591">
    <property type="entry name" value="H83591"/>
</dbReference>
<dbReference type="RefSeq" id="NP_249123.1">
    <property type="nucleotide sequence ID" value="NC_002516.2"/>
</dbReference>
<dbReference type="RefSeq" id="WP_003099900.1">
    <property type="nucleotide sequence ID" value="NZ_QZGE01000016.1"/>
</dbReference>
<dbReference type="PDB" id="6F3N">
    <property type="method" value="X-ray"/>
    <property type="resolution" value="1.85 A"/>
    <property type="chains" value="A/B/C/D=1-469"/>
</dbReference>
<dbReference type="PDB" id="6F3O">
    <property type="method" value="X-ray"/>
    <property type="resolution" value="1.75 A"/>
    <property type="chains" value="A/B/C/D=1-469"/>
</dbReference>
<dbReference type="PDB" id="6F3P">
    <property type="method" value="X-ray"/>
    <property type="resolution" value="1.35 A"/>
    <property type="chains" value="A/C=1-469"/>
</dbReference>
<dbReference type="PDB" id="6F3Q">
    <property type="method" value="X-ray"/>
    <property type="resolution" value="1.45 A"/>
    <property type="chains" value="A/B/C/D=1-469"/>
</dbReference>
<dbReference type="PDB" id="7ZD0">
    <property type="method" value="X-ray"/>
    <property type="resolution" value="1.87 A"/>
    <property type="chains" value="A/B/C/D=1-469"/>
</dbReference>
<dbReference type="PDB" id="7ZD1">
    <property type="method" value="X-ray"/>
    <property type="resolution" value="1.56 A"/>
    <property type="chains" value="A/B/C/D=1-469"/>
</dbReference>
<dbReference type="PDB" id="7ZD2">
    <property type="method" value="X-ray"/>
    <property type="resolution" value="2.16 A"/>
    <property type="chains" value="A/B/C/D=1-469"/>
</dbReference>
<dbReference type="PDB" id="7ZD3">
    <property type="method" value="X-ray"/>
    <property type="resolution" value="1.90 A"/>
    <property type="chains" value="A/B/C/D=1-469"/>
</dbReference>
<dbReference type="PDB" id="7ZD4">
    <property type="method" value="X-ray"/>
    <property type="resolution" value="2.14 A"/>
    <property type="chains" value="A/B/C/D=1-469"/>
</dbReference>
<dbReference type="PDB" id="8AJS">
    <property type="method" value="X-ray"/>
    <property type="resolution" value="1.68 A"/>
    <property type="chains" value="AAA/BBB/CCC/DDD=1-469"/>
</dbReference>
<dbReference type="PDB" id="8AJT">
    <property type="method" value="X-ray"/>
    <property type="resolution" value="1.50 A"/>
    <property type="chains" value="AAA/BBB/CCC/DDD=1-469"/>
</dbReference>
<dbReference type="PDB" id="8AJU">
    <property type="method" value="X-ray"/>
    <property type="resolution" value="1.65 A"/>
    <property type="chains" value="AAA/CCC=1-469"/>
</dbReference>
<dbReference type="PDB" id="8AJV">
    <property type="method" value="X-ray"/>
    <property type="resolution" value="1.90 A"/>
    <property type="chains" value="AAA/BBB/CCC/DDD/FFF/GGG/HHH/III=1-469"/>
</dbReference>
<dbReference type="PDB" id="8AJW">
    <property type="method" value="X-ray"/>
    <property type="resolution" value="1.82 A"/>
    <property type="chains" value="AAA/BBB/CCC/DDD=1-469"/>
</dbReference>
<dbReference type="PDB" id="8CFB">
    <property type="method" value="X-ray"/>
    <property type="resolution" value="2.07 A"/>
    <property type="chains" value="A/B/C/D=1-469"/>
</dbReference>
<dbReference type="PDB" id="8CFC">
    <property type="method" value="X-ray"/>
    <property type="resolution" value="1.64 A"/>
    <property type="chains" value="A/B/C/D=1-469"/>
</dbReference>
<dbReference type="PDB" id="8CFD">
    <property type="method" value="X-ray"/>
    <property type="resolution" value="1.88 A"/>
    <property type="chains" value="A/B/C/D=1-469"/>
</dbReference>
<dbReference type="PDB" id="8CFE">
    <property type="method" value="X-ray"/>
    <property type="resolution" value="1.80 A"/>
    <property type="chains" value="A/B/C/D=1-469"/>
</dbReference>
<dbReference type="PDB" id="8CFG">
    <property type="method" value="X-ray"/>
    <property type="resolution" value="1.73 A"/>
    <property type="chains" value="A/B/C/D=1-469"/>
</dbReference>
<dbReference type="PDB" id="8CFH">
    <property type="method" value="X-ray"/>
    <property type="resolution" value="1.60 A"/>
    <property type="chains" value="A/B/C/D=1-469"/>
</dbReference>
<dbReference type="PDB" id="8CFI">
    <property type="method" value="X-ray"/>
    <property type="resolution" value="2.02 A"/>
    <property type="chains" value="A/B/C/D=1-469"/>
</dbReference>
<dbReference type="PDB" id="8CFJ">
    <property type="method" value="X-ray"/>
    <property type="resolution" value="1.64 A"/>
    <property type="chains" value="A/B/C/D=1-469"/>
</dbReference>
<dbReference type="PDB" id="8CFK">
    <property type="method" value="X-ray"/>
    <property type="resolution" value="1.73 A"/>
    <property type="chains" value="A/B/C/D=1-469"/>
</dbReference>
<dbReference type="PDB" id="8CFL">
    <property type="method" value="X-ray"/>
    <property type="resolution" value="1.73 A"/>
    <property type="chains" value="A/B/C/D=1-469"/>
</dbReference>
<dbReference type="PDB" id="8CFM">
    <property type="method" value="X-ray"/>
    <property type="resolution" value="1.84 A"/>
    <property type="chains" value="A/B/C/D=1-469"/>
</dbReference>
<dbReference type="PDB" id="8CFN">
    <property type="method" value="X-ray"/>
    <property type="resolution" value="1.34 A"/>
    <property type="chains" value="A/C=1-469"/>
</dbReference>
<dbReference type="PDB" id="8CFO">
    <property type="method" value="X-ray"/>
    <property type="resolution" value="2.13 A"/>
    <property type="chains" value="A/B/C/D=1-469"/>
</dbReference>
<dbReference type="PDB" id="8CFP">
    <property type="method" value="X-ray"/>
    <property type="resolution" value="1.61 A"/>
    <property type="chains" value="A/B/C/D=1-469"/>
</dbReference>
<dbReference type="PDB" id="8CFQ">
    <property type="method" value="X-ray"/>
    <property type="resolution" value="1.73 A"/>
    <property type="chains" value="A/B/C/D=1-469"/>
</dbReference>
<dbReference type="PDB" id="8CFR">
    <property type="method" value="X-ray"/>
    <property type="resolution" value="1.89 A"/>
    <property type="chains" value="A/B/C/D=1-469"/>
</dbReference>
<dbReference type="PDB" id="8CFS">
    <property type="method" value="X-ray"/>
    <property type="resolution" value="1.64 A"/>
    <property type="chains" value="A/B/C/D=1-469"/>
</dbReference>
<dbReference type="PDB" id="8CFT">
    <property type="method" value="X-ray"/>
    <property type="resolution" value="1.72 A"/>
    <property type="chains" value="A/B/C/D=1-469"/>
</dbReference>
<dbReference type="PDB" id="8CFU">
    <property type="method" value="X-ray"/>
    <property type="resolution" value="1.50 A"/>
    <property type="chains" value="A/B/C/D=1-469"/>
</dbReference>
<dbReference type="PDB" id="8CFV">
    <property type="method" value="X-ray"/>
    <property type="resolution" value="1.88 A"/>
    <property type="chains" value="A/B/C/D=1-469"/>
</dbReference>
<dbReference type="PDB" id="8CFW">
    <property type="method" value="X-ray"/>
    <property type="resolution" value="1.61 A"/>
    <property type="chains" value="A/B/C/D=1-469"/>
</dbReference>
<dbReference type="PDB" id="8CFX">
    <property type="method" value="X-ray"/>
    <property type="resolution" value="1.98 A"/>
    <property type="chains" value="A/B/C/D/G/H/I/J=1-469"/>
</dbReference>
<dbReference type="PDB" id="8CFY">
    <property type="method" value="X-ray"/>
    <property type="resolution" value="1.88 A"/>
    <property type="chains" value="A/B/C/D/G/H/I/J=1-469"/>
</dbReference>
<dbReference type="PDB" id="8CFZ">
    <property type="method" value="X-ray"/>
    <property type="resolution" value="1.77 A"/>
    <property type="chains" value="A/B/C/D/H/I/J/K=1-469"/>
</dbReference>
<dbReference type="PDB" id="8CG0">
    <property type="method" value="X-ray"/>
    <property type="resolution" value="1.60 A"/>
    <property type="chains" value="A/B/C/D=1-469"/>
</dbReference>
<dbReference type="PDB" id="8CG1">
    <property type="method" value="X-ray"/>
    <property type="resolution" value="2.02 A"/>
    <property type="chains" value="A/B/C/D/G/H/I/J=1-469"/>
</dbReference>
<dbReference type="PDB" id="8CG2">
    <property type="method" value="X-ray"/>
    <property type="resolution" value="1.37 A"/>
    <property type="chains" value="A/C=1-469"/>
</dbReference>
<dbReference type="PDB" id="9HKV">
    <property type="method" value="EM"/>
    <property type="resolution" value="2.88 A"/>
    <property type="chains" value="A/B/C/D=1-469"/>
</dbReference>
<dbReference type="PDB" id="9HKW">
    <property type="method" value="EM"/>
    <property type="resolution" value="2.85 A"/>
    <property type="chains" value="A/B/C/D=1-469"/>
</dbReference>
<dbReference type="PDB" id="9HKX">
    <property type="method" value="EM"/>
    <property type="resolution" value="2.83 A"/>
    <property type="chains" value="A/B/C/D=1-469"/>
</dbReference>
<dbReference type="PDB" id="9HKY">
    <property type="method" value="EM"/>
    <property type="resolution" value="2.89 A"/>
    <property type="chains" value="A/B/C/D=1-469"/>
</dbReference>
<dbReference type="PDB" id="9HKZ">
    <property type="method" value="EM"/>
    <property type="resolution" value="3.10 A"/>
    <property type="chains" value="A/B/C/D=1-469"/>
</dbReference>
<dbReference type="PDBsum" id="6F3N"/>
<dbReference type="PDBsum" id="6F3O"/>
<dbReference type="PDBsum" id="6F3P"/>
<dbReference type="PDBsum" id="6F3Q"/>
<dbReference type="PDBsum" id="7ZD0"/>
<dbReference type="PDBsum" id="7ZD1"/>
<dbReference type="PDBsum" id="7ZD2"/>
<dbReference type="PDBsum" id="7ZD3"/>
<dbReference type="PDBsum" id="7ZD4"/>
<dbReference type="PDBsum" id="8AJS"/>
<dbReference type="PDBsum" id="8AJT"/>
<dbReference type="PDBsum" id="8AJU"/>
<dbReference type="PDBsum" id="8AJV"/>
<dbReference type="PDBsum" id="8AJW"/>
<dbReference type="PDBsum" id="8CFB"/>
<dbReference type="PDBsum" id="8CFC"/>
<dbReference type="PDBsum" id="8CFD"/>
<dbReference type="PDBsum" id="8CFE"/>
<dbReference type="PDBsum" id="8CFG"/>
<dbReference type="PDBsum" id="8CFH"/>
<dbReference type="PDBsum" id="8CFI"/>
<dbReference type="PDBsum" id="8CFJ"/>
<dbReference type="PDBsum" id="8CFK"/>
<dbReference type="PDBsum" id="8CFL"/>
<dbReference type="PDBsum" id="8CFM"/>
<dbReference type="PDBsum" id="8CFN"/>
<dbReference type="PDBsum" id="8CFO"/>
<dbReference type="PDBsum" id="8CFP"/>
<dbReference type="PDBsum" id="8CFQ"/>
<dbReference type="PDBsum" id="8CFR"/>
<dbReference type="PDBsum" id="8CFS"/>
<dbReference type="PDBsum" id="8CFT"/>
<dbReference type="PDBsum" id="8CFU"/>
<dbReference type="PDBsum" id="8CFV"/>
<dbReference type="PDBsum" id="8CFW"/>
<dbReference type="PDBsum" id="8CFX"/>
<dbReference type="PDBsum" id="8CFY"/>
<dbReference type="PDBsum" id="8CFZ"/>
<dbReference type="PDBsum" id="8CG0"/>
<dbReference type="PDBsum" id="8CG1"/>
<dbReference type="PDBsum" id="8CG2"/>
<dbReference type="PDBsum" id="9HKV"/>
<dbReference type="PDBsum" id="9HKW"/>
<dbReference type="PDBsum" id="9HKX"/>
<dbReference type="PDBsum" id="9HKY"/>
<dbReference type="PDBsum" id="9HKZ"/>
<dbReference type="EMDB" id="EMD-52237"/>
<dbReference type="EMDB" id="EMD-52238"/>
<dbReference type="EMDB" id="EMD-52239"/>
<dbReference type="EMDB" id="EMD-52240"/>
<dbReference type="EMDB" id="EMD-52241"/>
<dbReference type="SMR" id="Q9I685"/>
<dbReference type="STRING" id="208964.PA0432"/>
<dbReference type="PaxDb" id="208964-PA0432"/>
<dbReference type="GeneID" id="877746"/>
<dbReference type="KEGG" id="pae:PA0432"/>
<dbReference type="PATRIC" id="fig|208964.12.peg.454"/>
<dbReference type="PseudoCAP" id="PA0432"/>
<dbReference type="HOGENOM" id="CLU_025194_2_1_6"/>
<dbReference type="InParanoid" id="Q9I685"/>
<dbReference type="OrthoDB" id="9802717at2"/>
<dbReference type="PhylomeDB" id="Q9I685"/>
<dbReference type="BioCyc" id="PAER208964:G1FZ6-436-MONOMER"/>
<dbReference type="BRENDA" id="3.3.1.1">
    <property type="organism ID" value="5087"/>
</dbReference>
<dbReference type="UniPathway" id="UPA00314">
    <property type="reaction ID" value="UER00076"/>
</dbReference>
<dbReference type="Proteomes" id="UP000002438">
    <property type="component" value="Chromosome"/>
</dbReference>
<dbReference type="GO" id="GO:0005829">
    <property type="term" value="C:cytosol"/>
    <property type="evidence" value="ECO:0000318"/>
    <property type="project" value="GO_Central"/>
</dbReference>
<dbReference type="GO" id="GO:0004013">
    <property type="term" value="F:adenosylhomocysteinase activity"/>
    <property type="evidence" value="ECO:0000318"/>
    <property type="project" value="GO_Central"/>
</dbReference>
<dbReference type="GO" id="GO:0071269">
    <property type="term" value="P:L-homocysteine biosynthetic process"/>
    <property type="evidence" value="ECO:0007669"/>
    <property type="project" value="UniProtKB-UniRule"/>
</dbReference>
<dbReference type="GO" id="GO:0006730">
    <property type="term" value="P:one-carbon metabolic process"/>
    <property type="evidence" value="ECO:0007669"/>
    <property type="project" value="UniProtKB-KW"/>
</dbReference>
<dbReference type="GO" id="GO:0033353">
    <property type="term" value="P:S-adenosylmethionine cycle"/>
    <property type="evidence" value="ECO:0000318"/>
    <property type="project" value="GO_Central"/>
</dbReference>
<dbReference type="CDD" id="cd00401">
    <property type="entry name" value="SAHH"/>
    <property type="match status" value="1"/>
</dbReference>
<dbReference type="FunFam" id="3.40.50.1480:FF:000006">
    <property type="entry name" value="Adenosylhomocysteinase"/>
    <property type="match status" value="1"/>
</dbReference>
<dbReference type="FunFam" id="3.40.50.1480:FF:000007">
    <property type="entry name" value="Adenosylhomocysteinase"/>
    <property type="match status" value="1"/>
</dbReference>
<dbReference type="FunFam" id="3.40.50.1480:FF:000013">
    <property type="entry name" value="Adenosylhomocysteinase"/>
    <property type="match status" value="1"/>
</dbReference>
<dbReference type="FunFam" id="3.40.50.720:FF:000155">
    <property type="entry name" value="Adenosylhomocysteinase"/>
    <property type="match status" value="1"/>
</dbReference>
<dbReference type="Gene3D" id="3.40.50.1480">
    <property type="entry name" value="Adenosylhomocysteinase-like"/>
    <property type="match status" value="3"/>
</dbReference>
<dbReference type="Gene3D" id="3.40.50.720">
    <property type="entry name" value="NAD(P)-binding Rossmann-like Domain"/>
    <property type="match status" value="1"/>
</dbReference>
<dbReference type="HAMAP" id="MF_00563">
    <property type="entry name" value="AdoHcyase"/>
    <property type="match status" value="1"/>
</dbReference>
<dbReference type="InterPro" id="IPR042172">
    <property type="entry name" value="Adenosylhomocyst_ase-like_sf"/>
</dbReference>
<dbReference type="InterPro" id="IPR000043">
    <property type="entry name" value="Adenosylhomocysteinase-like"/>
</dbReference>
<dbReference type="InterPro" id="IPR015878">
    <property type="entry name" value="Ado_hCys_hydrolase_NAD-bd"/>
</dbReference>
<dbReference type="InterPro" id="IPR036291">
    <property type="entry name" value="NAD(P)-bd_dom_sf"/>
</dbReference>
<dbReference type="InterPro" id="IPR020082">
    <property type="entry name" value="S-Ado-L-homoCys_hydrolase_CS"/>
</dbReference>
<dbReference type="NCBIfam" id="TIGR00936">
    <property type="entry name" value="ahcY"/>
    <property type="match status" value="1"/>
</dbReference>
<dbReference type="NCBIfam" id="NF004005">
    <property type="entry name" value="PRK05476.2-3"/>
    <property type="match status" value="1"/>
</dbReference>
<dbReference type="PANTHER" id="PTHR23420">
    <property type="entry name" value="ADENOSYLHOMOCYSTEINASE"/>
    <property type="match status" value="1"/>
</dbReference>
<dbReference type="PANTHER" id="PTHR23420:SF0">
    <property type="entry name" value="ADENOSYLHOMOCYSTEINASE"/>
    <property type="match status" value="1"/>
</dbReference>
<dbReference type="Pfam" id="PF05221">
    <property type="entry name" value="AdoHcyase"/>
    <property type="match status" value="1"/>
</dbReference>
<dbReference type="Pfam" id="PF00670">
    <property type="entry name" value="AdoHcyase_NAD"/>
    <property type="match status" value="1"/>
</dbReference>
<dbReference type="PIRSF" id="PIRSF001109">
    <property type="entry name" value="Ad_hcy_hydrolase"/>
    <property type="match status" value="1"/>
</dbReference>
<dbReference type="SMART" id="SM00996">
    <property type="entry name" value="AdoHcyase"/>
    <property type="match status" value="1"/>
</dbReference>
<dbReference type="SMART" id="SM00997">
    <property type="entry name" value="AdoHcyase_NAD"/>
    <property type="match status" value="1"/>
</dbReference>
<dbReference type="SUPFAM" id="SSF52283">
    <property type="entry name" value="Formate/glycerate dehydrogenase catalytic domain-like"/>
    <property type="match status" value="1"/>
</dbReference>
<dbReference type="SUPFAM" id="SSF51735">
    <property type="entry name" value="NAD(P)-binding Rossmann-fold domains"/>
    <property type="match status" value="1"/>
</dbReference>
<dbReference type="PROSITE" id="PS00738">
    <property type="entry name" value="ADOHCYASE_1"/>
    <property type="match status" value="1"/>
</dbReference>
<dbReference type="PROSITE" id="PS00739">
    <property type="entry name" value="ADOHCYASE_2"/>
    <property type="match status" value="1"/>
</dbReference>
<gene>
    <name evidence="1" type="primary">ahcY</name>
    <name type="synonym">sahH</name>
    <name type="ordered locus">PA0432</name>
</gene>
<accession>Q9I685</accession>
<name>SAHH_PSEAE</name>
<feature type="chain" id="PRO_0000116977" description="Adenosylhomocysteinase">
    <location>
        <begin position="1"/>
        <end position="469"/>
    </location>
</feature>
<feature type="binding site" evidence="1">
    <location>
        <position position="63"/>
    </location>
    <ligand>
        <name>substrate</name>
    </ligand>
</feature>
<feature type="binding site" evidence="1">
    <location>
        <position position="139"/>
    </location>
    <ligand>
        <name>substrate</name>
    </ligand>
</feature>
<feature type="binding site" evidence="1">
    <location>
        <position position="164"/>
    </location>
    <ligand>
        <name>substrate</name>
    </ligand>
</feature>
<feature type="binding site" evidence="1">
    <location>
        <begin position="165"/>
        <end position="167"/>
    </location>
    <ligand>
        <name>NAD(+)</name>
        <dbReference type="ChEBI" id="CHEBI:57540"/>
    </ligand>
</feature>
<feature type="binding site" evidence="1">
    <location>
        <position position="194"/>
    </location>
    <ligand>
        <name>substrate</name>
    </ligand>
</feature>
<feature type="binding site" evidence="1">
    <location>
        <position position="198"/>
    </location>
    <ligand>
        <name>substrate</name>
    </ligand>
</feature>
<feature type="binding site" evidence="1">
    <location>
        <position position="199"/>
    </location>
    <ligand>
        <name>NAD(+)</name>
        <dbReference type="ChEBI" id="CHEBI:57540"/>
    </ligand>
</feature>
<feature type="binding site" evidence="1">
    <location>
        <begin position="228"/>
        <end position="233"/>
    </location>
    <ligand>
        <name>NAD(+)</name>
        <dbReference type="ChEBI" id="CHEBI:57540"/>
    </ligand>
</feature>
<feature type="binding site" evidence="1">
    <location>
        <position position="251"/>
    </location>
    <ligand>
        <name>NAD(+)</name>
        <dbReference type="ChEBI" id="CHEBI:57540"/>
    </ligand>
</feature>
<feature type="binding site" evidence="1">
    <location>
        <position position="300"/>
    </location>
    <ligand>
        <name>NAD(+)</name>
        <dbReference type="ChEBI" id="CHEBI:57540"/>
    </ligand>
</feature>
<feature type="binding site" evidence="1">
    <location>
        <begin position="321"/>
        <end position="323"/>
    </location>
    <ligand>
        <name>NAD(+)</name>
        <dbReference type="ChEBI" id="CHEBI:57540"/>
    </ligand>
</feature>
<feature type="binding site" evidence="1">
    <location>
        <position position="375"/>
    </location>
    <ligand>
        <name>NAD(+)</name>
        <dbReference type="ChEBI" id="CHEBI:57540"/>
    </ligand>
</feature>
<feature type="strand" evidence="3">
    <location>
        <begin position="14"/>
        <end position="16"/>
    </location>
</feature>
<feature type="helix" evidence="4">
    <location>
        <begin position="18"/>
        <end position="20"/>
    </location>
</feature>
<feature type="helix" evidence="4">
    <location>
        <begin position="21"/>
        <end position="33"/>
    </location>
</feature>
<feature type="helix" evidence="4">
    <location>
        <begin position="36"/>
        <end position="45"/>
    </location>
</feature>
<feature type="turn" evidence="4">
    <location>
        <begin position="46"/>
        <end position="48"/>
    </location>
</feature>
<feature type="turn" evidence="4">
    <location>
        <begin position="50"/>
        <end position="53"/>
    </location>
</feature>
<feature type="strand" evidence="4">
    <location>
        <begin position="55"/>
        <end position="60"/>
    </location>
</feature>
<feature type="helix" evidence="4">
    <location>
        <begin position="64"/>
        <end position="75"/>
    </location>
</feature>
<feature type="strand" evidence="4">
    <location>
        <begin position="79"/>
        <end position="83"/>
    </location>
</feature>
<feature type="strand" evidence="5">
    <location>
        <begin position="85"/>
        <end position="88"/>
    </location>
</feature>
<feature type="helix" evidence="4">
    <location>
        <begin position="92"/>
        <end position="100"/>
    </location>
</feature>
<feature type="strand" evidence="3">
    <location>
        <begin position="105"/>
        <end position="107"/>
    </location>
</feature>
<feature type="helix" evidence="4">
    <location>
        <begin position="113"/>
        <end position="124"/>
    </location>
</feature>
<feature type="strand" evidence="4">
    <location>
        <begin position="135"/>
        <end position="141"/>
    </location>
</feature>
<feature type="helix" evidence="4">
    <location>
        <begin position="142"/>
        <end position="150"/>
    </location>
</feature>
<feature type="helix" evidence="4">
    <location>
        <begin position="152"/>
        <end position="157"/>
    </location>
</feature>
<feature type="strand" evidence="4">
    <location>
        <begin position="161"/>
        <end position="163"/>
    </location>
</feature>
<feature type="helix" evidence="4">
    <location>
        <begin position="166"/>
        <end position="177"/>
    </location>
</feature>
<feature type="strand" evidence="4">
    <location>
        <begin position="185"/>
        <end position="187"/>
    </location>
</feature>
<feature type="helix" evidence="4">
    <location>
        <begin position="192"/>
        <end position="195"/>
    </location>
</feature>
<feature type="helix" evidence="4">
    <location>
        <begin position="196"/>
        <end position="200"/>
    </location>
</feature>
<feature type="helix" evidence="4">
    <location>
        <begin position="201"/>
        <end position="215"/>
    </location>
</feature>
<feature type="strand" evidence="4">
    <location>
        <begin position="223"/>
        <end position="227"/>
    </location>
</feature>
<feature type="helix" evidence="4">
    <location>
        <begin position="231"/>
        <end position="241"/>
    </location>
</feature>
<feature type="turn" evidence="4">
    <location>
        <begin position="242"/>
        <end position="244"/>
    </location>
</feature>
<feature type="strand" evidence="4">
    <location>
        <begin position="246"/>
        <end position="250"/>
    </location>
</feature>
<feature type="helix" evidence="4">
    <location>
        <begin position="254"/>
        <end position="262"/>
    </location>
</feature>
<feature type="helix" evidence="4">
    <location>
        <begin position="272"/>
        <end position="274"/>
    </location>
</feature>
<feature type="helix" evidence="4">
    <location>
        <begin position="280"/>
        <end position="282"/>
    </location>
</feature>
<feature type="helix" evidence="4">
    <location>
        <begin position="285"/>
        <end position="288"/>
    </location>
</feature>
<feature type="strand" evidence="4">
    <location>
        <begin position="292"/>
        <end position="296"/>
    </location>
</feature>
<feature type="strand" evidence="4">
    <location>
        <begin position="298"/>
        <end position="301"/>
    </location>
</feature>
<feature type="helix" evidence="4">
    <location>
        <begin position="306"/>
        <end position="311"/>
    </location>
</feature>
<feature type="strand" evidence="4">
    <location>
        <begin position="317"/>
        <end position="320"/>
    </location>
</feature>
<feature type="strand" evidence="4">
    <location>
        <begin position="322"/>
        <end position="324"/>
    </location>
</feature>
<feature type="helix" evidence="4">
    <location>
        <begin position="325"/>
        <end position="327"/>
    </location>
</feature>
<feature type="helix" evidence="4">
    <location>
        <begin position="330"/>
        <end position="336"/>
    </location>
</feature>
<feature type="strand" evidence="4">
    <location>
        <begin position="337"/>
        <end position="343"/>
    </location>
</feature>
<feature type="strand" evidence="4">
    <location>
        <begin position="346"/>
        <end position="350"/>
    </location>
</feature>
<feature type="strand" evidence="4">
    <location>
        <begin position="364"/>
        <end position="368"/>
    </location>
</feature>
<feature type="helix" evidence="4">
    <location>
        <begin position="369"/>
        <end position="371"/>
    </location>
</feature>
<feature type="helix" evidence="4">
    <location>
        <begin position="374"/>
        <end position="378"/>
    </location>
</feature>
<feature type="helix" evidence="4">
    <location>
        <begin position="384"/>
        <end position="404"/>
    </location>
</feature>
<feature type="helix" evidence="4">
    <location>
        <begin position="406"/>
        <end position="408"/>
    </location>
</feature>
<feature type="helix" evidence="4">
    <location>
        <begin position="411"/>
        <end position="415"/>
    </location>
</feature>
<feature type="strand" evidence="2">
    <location>
        <begin position="419"/>
        <end position="421"/>
    </location>
</feature>
<feature type="helix" evidence="4">
    <location>
        <begin position="425"/>
        <end position="438"/>
    </location>
</feature>
<feature type="helix" evidence="4">
    <location>
        <begin position="448"/>
        <end position="454"/>
    </location>
</feature>
<comment type="function">
    <text evidence="1">May play a key role in the regulation of the intracellular concentration of adenosylhomocysteine.</text>
</comment>
<comment type="catalytic activity">
    <reaction evidence="1">
        <text>S-adenosyl-L-homocysteine + H2O = L-homocysteine + adenosine</text>
        <dbReference type="Rhea" id="RHEA:21708"/>
        <dbReference type="ChEBI" id="CHEBI:15377"/>
        <dbReference type="ChEBI" id="CHEBI:16335"/>
        <dbReference type="ChEBI" id="CHEBI:57856"/>
        <dbReference type="ChEBI" id="CHEBI:58199"/>
        <dbReference type="EC" id="3.13.2.1"/>
    </reaction>
</comment>
<comment type="cofactor">
    <cofactor evidence="1">
        <name>NAD(+)</name>
        <dbReference type="ChEBI" id="CHEBI:57540"/>
    </cofactor>
    <text evidence="1">Binds 1 NAD(+) per subunit.</text>
</comment>
<comment type="pathway">
    <text evidence="1">Amino-acid biosynthesis; L-homocysteine biosynthesis; L-homocysteine from S-adenosyl-L-homocysteine: step 1/1.</text>
</comment>
<comment type="subcellular location">
    <subcellularLocation>
        <location evidence="1">Cytoplasm</location>
    </subcellularLocation>
</comment>
<comment type="similarity">
    <text evidence="1">Belongs to the adenosylhomocysteinase family.</text>
</comment>
<reference key="1">
    <citation type="journal article" date="2000" name="Nature">
        <title>Complete genome sequence of Pseudomonas aeruginosa PAO1, an opportunistic pathogen.</title>
        <authorList>
            <person name="Stover C.K."/>
            <person name="Pham X.-Q.T."/>
            <person name="Erwin A.L."/>
            <person name="Mizoguchi S.D."/>
            <person name="Warrener P."/>
            <person name="Hickey M.J."/>
            <person name="Brinkman F.S.L."/>
            <person name="Hufnagle W.O."/>
            <person name="Kowalik D.J."/>
            <person name="Lagrou M."/>
            <person name="Garber R.L."/>
            <person name="Goltry L."/>
            <person name="Tolentino E."/>
            <person name="Westbrock-Wadman S."/>
            <person name="Yuan Y."/>
            <person name="Brody L.L."/>
            <person name="Coulter S.N."/>
            <person name="Folger K.R."/>
            <person name="Kas A."/>
            <person name="Larbig K."/>
            <person name="Lim R.M."/>
            <person name="Smith K.A."/>
            <person name="Spencer D.H."/>
            <person name="Wong G.K.-S."/>
            <person name="Wu Z."/>
            <person name="Paulsen I.T."/>
            <person name="Reizer J."/>
            <person name="Saier M.H. Jr."/>
            <person name="Hancock R.E.W."/>
            <person name="Lory S."/>
            <person name="Olson M.V."/>
        </authorList>
    </citation>
    <scope>NUCLEOTIDE SEQUENCE [LARGE SCALE GENOMIC DNA]</scope>
    <source>
        <strain>ATCC 15692 / DSM 22644 / CIP 104116 / JCM 14847 / LMG 12228 / 1C / PRS 101 / PAO1</strain>
    </source>
</reference>